<organism>
    <name type="scientific">Xanthomonas euvesicatoria pv. vesicatoria (strain 85-10)</name>
    <name type="common">Xanthomonas campestris pv. vesicatoria</name>
    <dbReference type="NCBI Taxonomy" id="316273"/>
    <lineage>
        <taxon>Bacteria</taxon>
        <taxon>Pseudomonadati</taxon>
        <taxon>Pseudomonadota</taxon>
        <taxon>Gammaproteobacteria</taxon>
        <taxon>Lysobacterales</taxon>
        <taxon>Lysobacteraceae</taxon>
        <taxon>Xanthomonas</taxon>
    </lineage>
</organism>
<protein>
    <recommendedName>
        <fullName evidence="1">Coenzyme PQQ synthesis protein B</fullName>
    </recommendedName>
    <alternativeName>
        <fullName evidence="1">Pyrroloquinoline quinone biosynthesis protein B</fullName>
    </alternativeName>
</protein>
<gene>
    <name evidence="1" type="primary">pqqB</name>
    <name type="ordered locus">XCV3245</name>
</gene>
<proteinExistence type="inferred from homology"/>
<evidence type="ECO:0000255" key="1">
    <source>
        <dbReference type="HAMAP-Rule" id="MF_00653"/>
    </source>
</evidence>
<accession>Q3BQI7</accession>
<name>PQQB_XANE5</name>
<feature type="chain" id="PRO_1000061662" description="Coenzyme PQQ synthesis protein B">
    <location>
        <begin position="1"/>
        <end position="299"/>
    </location>
</feature>
<sequence length="299" mass="32460">MRIIVLGSAAGGGHPQWNCHTLASLRAWQQTDGAQRRTQASIAVSADGERWVLINASPDFRQQILATPALWPQHGLRHSPIEAVLLTSGEIDHIAGLLSMRESQRFSLHASSRVLGLLAQNPIFDAVNPQYVSRQPFALDTPLVLCGLQLTPFSVPGKVPLFMESRSGGDLAGSDEETLGLTIDDGRRRMHYIPGCAAMTDALRARLQSAELVFFDGTLWRDDEMVQLGVSQKTGQRMGHMSIDGPDGTIAAFAPLNVARKIFIHLNTTNPVLDTLSPEFASARASGWEVAHDGLEIAL</sequence>
<dbReference type="EMBL" id="AM039952">
    <property type="protein sequence ID" value="CAJ24976.1"/>
    <property type="molecule type" value="Genomic_DNA"/>
</dbReference>
<dbReference type="RefSeq" id="WP_011348253.1">
    <property type="nucleotide sequence ID" value="NZ_CP017190.1"/>
</dbReference>
<dbReference type="SMR" id="Q3BQI7"/>
<dbReference type="STRING" id="456327.BJD11_06555"/>
<dbReference type="KEGG" id="xcv:XCV3245"/>
<dbReference type="eggNOG" id="COG1235">
    <property type="taxonomic scope" value="Bacteria"/>
</dbReference>
<dbReference type="HOGENOM" id="CLU_061120_0_0_6"/>
<dbReference type="UniPathway" id="UPA00539"/>
<dbReference type="Proteomes" id="UP000007069">
    <property type="component" value="Chromosome"/>
</dbReference>
<dbReference type="GO" id="GO:0018189">
    <property type="term" value="P:pyrroloquinoline quinone biosynthetic process"/>
    <property type="evidence" value="ECO:0007669"/>
    <property type="project" value="UniProtKB-UniRule"/>
</dbReference>
<dbReference type="CDD" id="cd16274">
    <property type="entry name" value="PQQB-like_MBL-fold"/>
    <property type="match status" value="1"/>
</dbReference>
<dbReference type="Gene3D" id="3.60.15.10">
    <property type="entry name" value="Ribonuclease Z/Hydroxyacylglutathione hydrolase-like"/>
    <property type="match status" value="1"/>
</dbReference>
<dbReference type="HAMAP" id="MF_00653">
    <property type="entry name" value="PQQ_syn_PqqB"/>
    <property type="match status" value="1"/>
</dbReference>
<dbReference type="InterPro" id="IPR001279">
    <property type="entry name" value="Metallo-B-lactamas"/>
</dbReference>
<dbReference type="InterPro" id="IPR011842">
    <property type="entry name" value="PQQ_synth_PqqB"/>
</dbReference>
<dbReference type="InterPro" id="IPR036866">
    <property type="entry name" value="RibonucZ/Hydroxyglut_hydro"/>
</dbReference>
<dbReference type="NCBIfam" id="TIGR02108">
    <property type="entry name" value="PQQ_syn_pqqB"/>
    <property type="match status" value="1"/>
</dbReference>
<dbReference type="PANTHER" id="PTHR42663:SF7">
    <property type="entry name" value="COENZYME PQQ SYNTHESIS PROTEIN B"/>
    <property type="match status" value="1"/>
</dbReference>
<dbReference type="PANTHER" id="PTHR42663">
    <property type="entry name" value="HYDROLASE C777.06C-RELATED-RELATED"/>
    <property type="match status" value="1"/>
</dbReference>
<dbReference type="Pfam" id="PF12706">
    <property type="entry name" value="Lactamase_B_2"/>
    <property type="match status" value="1"/>
</dbReference>
<dbReference type="SUPFAM" id="SSF56281">
    <property type="entry name" value="Metallo-hydrolase/oxidoreductase"/>
    <property type="match status" value="1"/>
</dbReference>
<reference key="1">
    <citation type="journal article" date="2005" name="J. Bacteriol.">
        <title>Insights into genome plasticity and pathogenicity of the plant pathogenic Bacterium Xanthomonas campestris pv. vesicatoria revealed by the complete genome sequence.</title>
        <authorList>
            <person name="Thieme F."/>
            <person name="Koebnik R."/>
            <person name="Bekel T."/>
            <person name="Berger C."/>
            <person name="Boch J."/>
            <person name="Buettner D."/>
            <person name="Caldana C."/>
            <person name="Gaigalat L."/>
            <person name="Goesmann A."/>
            <person name="Kay S."/>
            <person name="Kirchner O."/>
            <person name="Lanz C."/>
            <person name="Linke B."/>
            <person name="McHardy A.C."/>
            <person name="Meyer F."/>
            <person name="Mittenhuber G."/>
            <person name="Nies D.H."/>
            <person name="Niesbach-Kloesgen U."/>
            <person name="Patschkowski T."/>
            <person name="Rueckert C."/>
            <person name="Rupp O."/>
            <person name="Schneiker S."/>
            <person name="Schuster S.C."/>
            <person name="Vorhoelter F.J."/>
            <person name="Weber E."/>
            <person name="Puehler A."/>
            <person name="Bonas U."/>
            <person name="Bartels D."/>
            <person name="Kaiser O."/>
        </authorList>
    </citation>
    <scope>NUCLEOTIDE SEQUENCE [LARGE SCALE GENOMIC DNA]</scope>
    <source>
        <strain>85-10</strain>
    </source>
</reference>
<keyword id="KW-0884">PQQ biosynthesis</keyword>
<keyword id="KW-0813">Transport</keyword>
<comment type="function">
    <text evidence="1">May be involved in the transport of PQQ or its precursor to the periplasm.</text>
</comment>
<comment type="pathway">
    <text evidence="1">Cofactor biosynthesis; pyrroloquinoline quinone biosynthesis.</text>
</comment>
<comment type="similarity">
    <text evidence="1">Belongs to the PqqB family.</text>
</comment>